<gene>
    <name evidence="1" type="primary">lig</name>
    <name type="ordered locus">NFA_52520</name>
</gene>
<sequence>MLFADVVRTSEAVRATRSRKTKVAALAELLRAAESAELAPVVAWLSGELRQGRIGTGWRTLTGVRVPPALDAALEVATVDAIFDELAAVSGAGSGNRRKELLTRLWSAATEPEQEFLLRLLTGELRQGALTALVAEAVAAAADVPVEQVRRAYMLSGQLPVTAEAALRGGAAALAEFRLEVGRPIQPMLAAPGASLEEAMTEFGGEVSVEHKLDGARIQVHRDGDRIAVFTRTLRDITAGVPELVELVARLDCTSVVLDGETLALTDAGRPRPFQETMSRFATADPARAAEVDLPPGTPVVPPVSSTRELLLHPYFFDCLHLDGRDLLDAPLSERRAALLAVVGEHAIPALIRPEPEAAAEYFDGALAAGHEGLMVKSLSAPYAAGRRGRSWQKIKPTHTLDLLVLGAEWGYGRRTGYLSNLHLGARDPRTGEPVMVGKTFKGLTDALLAWQTAEFPRHERARDEHTVYLWPELVVEIALDGVQVSPRYPGGVALRFARVVRYRPDKTPDQADTIDTVRGLLP</sequence>
<comment type="function">
    <text evidence="1">DNA ligase that seals nicks in double-stranded DNA during DNA replication, DNA recombination and DNA repair.</text>
</comment>
<comment type="catalytic activity">
    <reaction evidence="1">
        <text>ATP + (deoxyribonucleotide)n-3'-hydroxyl + 5'-phospho-(deoxyribonucleotide)m = (deoxyribonucleotide)n+m + AMP + diphosphate.</text>
        <dbReference type="EC" id="6.5.1.1"/>
    </reaction>
</comment>
<comment type="cofactor">
    <cofactor evidence="1">
        <name>Mg(2+)</name>
        <dbReference type="ChEBI" id="CHEBI:18420"/>
    </cofactor>
</comment>
<comment type="similarity">
    <text evidence="1">Belongs to the ATP-dependent DNA ligase family.</text>
</comment>
<evidence type="ECO:0000255" key="1">
    <source>
        <dbReference type="HAMAP-Rule" id="MF_00407"/>
    </source>
</evidence>
<name>DNLI_NOCFA</name>
<accession>Q5YNY7</accession>
<protein>
    <recommendedName>
        <fullName evidence="1">Probable DNA ligase</fullName>
        <ecNumber evidence="1">6.5.1.1</ecNumber>
    </recommendedName>
    <alternativeName>
        <fullName evidence="1">Polydeoxyribonucleotide synthase [ATP]</fullName>
    </alternativeName>
</protein>
<proteinExistence type="inferred from homology"/>
<feature type="chain" id="PRO_0000365235" description="Probable DNA ligase">
    <location>
        <begin position="1"/>
        <end position="523"/>
    </location>
</feature>
<feature type="active site" description="N6-AMP-lysine intermediate" evidence="1">
    <location>
        <position position="212"/>
    </location>
</feature>
<feature type="binding site" evidence="1">
    <location>
        <position position="210"/>
    </location>
    <ligand>
        <name>ATP</name>
        <dbReference type="ChEBI" id="CHEBI:30616"/>
    </ligand>
</feature>
<feature type="binding site" evidence="1">
    <location>
        <position position="217"/>
    </location>
    <ligand>
        <name>ATP</name>
        <dbReference type="ChEBI" id="CHEBI:30616"/>
    </ligand>
</feature>
<feature type="binding site" evidence="1">
    <location>
        <position position="232"/>
    </location>
    <ligand>
        <name>ATP</name>
        <dbReference type="ChEBI" id="CHEBI:30616"/>
    </ligand>
</feature>
<feature type="binding site" evidence="1">
    <location>
        <position position="261"/>
    </location>
    <ligand>
        <name>ATP</name>
        <dbReference type="ChEBI" id="CHEBI:30616"/>
    </ligand>
</feature>
<feature type="binding site" evidence="1">
    <location>
        <position position="317"/>
    </location>
    <ligand>
        <name>ATP</name>
        <dbReference type="ChEBI" id="CHEBI:30616"/>
    </ligand>
</feature>
<feature type="binding site" evidence="1">
    <location>
        <position position="388"/>
    </location>
    <ligand>
        <name>ATP</name>
        <dbReference type="ChEBI" id="CHEBI:30616"/>
    </ligand>
</feature>
<feature type="binding site" evidence="1">
    <location>
        <position position="394"/>
    </location>
    <ligand>
        <name>ATP</name>
        <dbReference type="ChEBI" id="CHEBI:30616"/>
    </ligand>
</feature>
<keyword id="KW-0067">ATP-binding</keyword>
<keyword id="KW-0131">Cell cycle</keyword>
<keyword id="KW-0132">Cell division</keyword>
<keyword id="KW-0227">DNA damage</keyword>
<keyword id="KW-0233">DNA recombination</keyword>
<keyword id="KW-0234">DNA repair</keyword>
<keyword id="KW-0235">DNA replication</keyword>
<keyword id="KW-0436">Ligase</keyword>
<keyword id="KW-0460">Magnesium</keyword>
<keyword id="KW-0479">Metal-binding</keyword>
<keyword id="KW-0547">Nucleotide-binding</keyword>
<keyword id="KW-1185">Reference proteome</keyword>
<dbReference type="EC" id="6.5.1.1" evidence="1"/>
<dbReference type="EMBL" id="AP006618">
    <property type="protein sequence ID" value="BAD60104.1"/>
    <property type="molecule type" value="Genomic_DNA"/>
</dbReference>
<dbReference type="RefSeq" id="WP_011211786.1">
    <property type="nucleotide sequence ID" value="NC_006361.1"/>
</dbReference>
<dbReference type="SMR" id="Q5YNY7"/>
<dbReference type="STRING" id="247156.NFA_52520"/>
<dbReference type="GeneID" id="61135829"/>
<dbReference type="KEGG" id="nfa:NFA_52520"/>
<dbReference type="eggNOG" id="COG1793">
    <property type="taxonomic scope" value="Bacteria"/>
</dbReference>
<dbReference type="HOGENOM" id="CLU_005138_6_1_11"/>
<dbReference type="OrthoDB" id="3733803at2"/>
<dbReference type="Proteomes" id="UP000006820">
    <property type="component" value="Chromosome"/>
</dbReference>
<dbReference type="GO" id="GO:0005524">
    <property type="term" value="F:ATP binding"/>
    <property type="evidence" value="ECO:0007669"/>
    <property type="project" value="UniProtKB-UniRule"/>
</dbReference>
<dbReference type="GO" id="GO:0003677">
    <property type="term" value="F:DNA binding"/>
    <property type="evidence" value="ECO:0007669"/>
    <property type="project" value="InterPro"/>
</dbReference>
<dbReference type="GO" id="GO:0003910">
    <property type="term" value="F:DNA ligase (ATP) activity"/>
    <property type="evidence" value="ECO:0007669"/>
    <property type="project" value="UniProtKB-UniRule"/>
</dbReference>
<dbReference type="GO" id="GO:0046872">
    <property type="term" value="F:metal ion binding"/>
    <property type="evidence" value="ECO:0007669"/>
    <property type="project" value="UniProtKB-KW"/>
</dbReference>
<dbReference type="GO" id="GO:0051301">
    <property type="term" value="P:cell division"/>
    <property type="evidence" value="ECO:0007669"/>
    <property type="project" value="UniProtKB-KW"/>
</dbReference>
<dbReference type="GO" id="GO:0071897">
    <property type="term" value="P:DNA biosynthetic process"/>
    <property type="evidence" value="ECO:0007669"/>
    <property type="project" value="InterPro"/>
</dbReference>
<dbReference type="GO" id="GO:0006310">
    <property type="term" value="P:DNA recombination"/>
    <property type="evidence" value="ECO:0007669"/>
    <property type="project" value="UniProtKB-UniRule"/>
</dbReference>
<dbReference type="GO" id="GO:0006281">
    <property type="term" value="P:DNA repair"/>
    <property type="evidence" value="ECO:0007669"/>
    <property type="project" value="UniProtKB-UniRule"/>
</dbReference>
<dbReference type="GO" id="GO:0006260">
    <property type="term" value="P:DNA replication"/>
    <property type="evidence" value="ECO:0007669"/>
    <property type="project" value="UniProtKB-UniRule"/>
</dbReference>
<dbReference type="CDD" id="cd07901">
    <property type="entry name" value="Adenylation_DNA_ligase_Arch_LigB"/>
    <property type="match status" value="1"/>
</dbReference>
<dbReference type="FunFam" id="2.40.50.140:FF:000163">
    <property type="entry name" value="Probable DNA ligase"/>
    <property type="match status" value="1"/>
</dbReference>
<dbReference type="Gene3D" id="1.10.3260.10">
    <property type="entry name" value="DNA ligase, ATP-dependent, N-terminal domain"/>
    <property type="match status" value="1"/>
</dbReference>
<dbReference type="Gene3D" id="3.30.470.30">
    <property type="entry name" value="DNA ligase/mRNA capping enzyme"/>
    <property type="match status" value="1"/>
</dbReference>
<dbReference type="Gene3D" id="2.40.50.140">
    <property type="entry name" value="Nucleic acid-binding proteins"/>
    <property type="match status" value="1"/>
</dbReference>
<dbReference type="HAMAP" id="MF_00407">
    <property type="entry name" value="DNA_ligase"/>
    <property type="match status" value="1"/>
</dbReference>
<dbReference type="InterPro" id="IPR050191">
    <property type="entry name" value="ATP-dep_DNA_ligase"/>
</dbReference>
<dbReference type="InterPro" id="IPR022865">
    <property type="entry name" value="DNA_ligae_ATP-dep_bac/arc"/>
</dbReference>
<dbReference type="InterPro" id="IPR000977">
    <property type="entry name" value="DNA_ligase_ATP-dep"/>
</dbReference>
<dbReference type="InterPro" id="IPR012309">
    <property type="entry name" value="DNA_ligase_ATP-dep_C"/>
</dbReference>
<dbReference type="InterPro" id="IPR012310">
    <property type="entry name" value="DNA_ligase_ATP-dep_cent"/>
</dbReference>
<dbReference type="InterPro" id="IPR016059">
    <property type="entry name" value="DNA_ligase_ATP-dep_CS"/>
</dbReference>
<dbReference type="InterPro" id="IPR012308">
    <property type="entry name" value="DNA_ligase_ATP-dep_N"/>
</dbReference>
<dbReference type="InterPro" id="IPR036599">
    <property type="entry name" value="DNA_ligase_N_sf"/>
</dbReference>
<dbReference type="InterPro" id="IPR012340">
    <property type="entry name" value="NA-bd_OB-fold"/>
</dbReference>
<dbReference type="NCBIfam" id="TIGR00574">
    <property type="entry name" value="dnl1"/>
    <property type="match status" value="1"/>
</dbReference>
<dbReference type="NCBIfam" id="NF002868">
    <property type="entry name" value="PRK03180.1"/>
    <property type="match status" value="1"/>
</dbReference>
<dbReference type="PANTHER" id="PTHR45674">
    <property type="entry name" value="DNA LIGASE 1/3 FAMILY MEMBER"/>
    <property type="match status" value="1"/>
</dbReference>
<dbReference type="PANTHER" id="PTHR45674:SF13">
    <property type="entry name" value="DNA LIGASE-RELATED"/>
    <property type="match status" value="1"/>
</dbReference>
<dbReference type="Pfam" id="PF04679">
    <property type="entry name" value="DNA_ligase_A_C"/>
    <property type="match status" value="1"/>
</dbReference>
<dbReference type="Pfam" id="PF01068">
    <property type="entry name" value="DNA_ligase_A_M"/>
    <property type="match status" value="1"/>
</dbReference>
<dbReference type="Pfam" id="PF04675">
    <property type="entry name" value="DNA_ligase_A_N"/>
    <property type="match status" value="1"/>
</dbReference>
<dbReference type="SUPFAM" id="SSF117018">
    <property type="entry name" value="ATP-dependent DNA ligase DNA-binding domain"/>
    <property type="match status" value="1"/>
</dbReference>
<dbReference type="SUPFAM" id="SSF56091">
    <property type="entry name" value="DNA ligase/mRNA capping enzyme, catalytic domain"/>
    <property type="match status" value="1"/>
</dbReference>
<dbReference type="SUPFAM" id="SSF50249">
    <property type="entry name" value="Nucleic acid-binding proteins"/>
    <property type="match status" value="1"/>
</dbReference>
<dbReference type="PROSITE" id="PS00697">
    <property type="entry name" value="DNA_LIGASE_A1"/>
    <property type="match status" value="1"/>
</dbReference>
<dbReference type="PROSITE" id="PS50160">
    <property type="entry name" value="DNA_LIGASE_A3"/>
    <property type="match status" value="1"/>
</dbReference>
<reference key="1">
    <citation type="journal article" date="2004" name="Proc. Natl. Acad. Sci. U.S.A.">
        <title>The complete genomic sequence of Nocardia farcinica IFM 10152.</title>
        <authorList>
            <person name="Ishikawa J."/>
            <person name="Yamashita A."/>
            <person name="Mikami Y."/>
            <person name="Hoshino Y."/>
            <person name="Kurita H."/>
            <person name="Hotta K."/>
            <person name="Shiba T."/>
            <person name="Hattori M."/>
        </authorList>
    </citation>
    <scope>NUCLEOTIDE SEQUENCE [LARGE SCALE GENOMIC DNA]</scope>
    <source>
        <strain>IFM 10152</strain>
    </source>
</reference>
<organism>
    <name type="scientific">Nocardia farcinica (strain IFM 10152)</name>
    <dbReference type="NCBI Taxonomy" id="247156"/>
    <lineage>
        <taxon>Bacteria</taxon>
        <taxon>Bacillati</taxon>
        <taxon>Actinomycetota</taxon>
        <taxon>Actinomycetes</taxon>
        <taxon>Mycobacteriales</taxon>
        <taxon>Nocardiaceae</taxon>
        <taxon>Nocardia</taxon>
    </lineage>
</organism>